<sequence>MGSNSTSSAESNCNATYLPFQYSLYATTYIFIFIPGLLANSAALWVLCRFISKKNKAIIFMINLSVADLAHILSLPLRIYYYINRHWPFQRALCLLCFYLKYLNMYASIFFLTCISLQRCLFLLKPFRARNWKRRYDVGISAVIWIVVGTACLPFPILRNAGLANSTDSCFADLGYKQMDAVVLVTMVVIAELAGFVIPVITIACCTWKTTVSLKHPPIAFQGISERKKALRMVFMCAAVFVICFTPYHINFIFYTMVKESIITSCPTVKSTLYFHPFSLCLASLCCLLDPILYYFMASEFRDQLSRHGSSVTRSRLMSRESGSSMVN</sequence>
<accession>Q8BFU7</accession>
<accession>A2ASC0</accession>
<accession>Q7TMT1</accession>
<protein>
    <recommendedName>
        <fullName>Putative P2Y purinoceptor 10</fullName>
        <shortName>P2Y10</shortName>
    </recommendedName>
</protein>
<reference key="1">
    <citation type="journal article" date="2005" name="Science">
        <title>The transcriptional landscape of the mammalian genome.</title>
        <authorList>
            <person name="Carninci P."/>
            <person name="Kasukawa T."/>
            <person name="Katayama S."/>
            <person name="Gough J."/>
            <person name="Frith M.C."/>
            <person name="Maeda N."/>
            <person name="Oyama R."/>
            <person name="Ravasi T."/>
            <person name="Lenhard B."/>
            <person name="Wells C."/>
            <person name="Kodzius R."/>
            <person name="Shimokawa K."/>
            <person name="Bajic V.B."/>
            <person name="Brenner S.E."/>
            <person name="Batalov S."/>
            <person name="Forrest A.R."/>
            <person name="Zavolan M."/>
            <person name="Davis M.J."/>
            <person name="Wilming L.G."/>
            <person name="Aidinis V."/>
            <person name="Allen J.E."/>
            <person name="Ambesi-Impiombato A."/>
            <person name="Apweiler R."/>
            <person name="Aturaliya R.N."/>
            <person name="Bailey T.L."/>
            <person name="Bansal M."/>
            <person name="Baxter L."/>
            <person name="Beisel K.W."/>
            <person name="Bersano T."/>
            <person name="Bono H."/>
            <person name="Chalk A.M."/>
            <person name="Chiu K.P."/>
            <person name="Choudhary V."/>
            <person name="Christoffels A."/>
            <person name="Clutterbuck D.R."/>
            <person name="Crowe M.L."/>
            <person name="Dalla E."/>
            <person name="Dalrymple B.P."/>
            <person name="de Bono B."/>
            <person name="Della Gatta G."/>
            <person name="di Bernardo D."/>
            <person name="Down T."/>
            <person name="Engstrom P."/>
            <person name="Fagiolini M."/>
            <person name="Faulkner G."/>
            <person name="Fletcher C.F."/>
            <person name="Fukushima T."/>
            <person name="Furuno M."/>
            <person name="Futaki S."/>
            <person name="Gariboldi M."/>
            <person name="Georgii-Hemming P."/>
            <person name="Gingeras T.R."/>
            <person name="Gojobori T."/>
            <person name="Green R.E."/>
            <person name="Gustincich S."/>
            <person name="Harbers M."/>
            <person name="Hayashi Y."/>
            <person name="Hensch T.K."/>
            <person name="Hirokawa N."/>
            <person name="Hill D."/>
            <person name="Huminiecki L."/>
            <person name="Iacono M."/>
            <person name="Ikeo K."/>
            <person name="Iwama A."/>
            <person name="Ishikawa T."/>
            <person name="Jakt M."/>
            <person name="Kanapin A."/>
            <person name="Katoh M."/>
            <person name="Kawasawa Y."/>
            <person name="Kelso J."/>
            <person name="Kitamura H."/>
            <person name="Kitano H."/>
            <person name="Kollias G."/>
            <person name="Krishnan S.P."/>
            <person name="Kruger A."/>
            <person name="Kummerfeld S.K."/>
            <person name="Kurochkin I.V."/>
            <person name="Lareau L.F."/>
            <person name="Lazarevic D."/>
            <person name="Lipovich L."/>
            <person name="Liu J."/>
            <person name="Liuni S."/>
            <person name="McWilliam S."/>
            <person name="Madan Babu M."/>
            <person name="Madera M."/>
            <person name="Marchionni L."/>
            <person name="Matsuda H."/>
            <person name="Matsuzawa S."/>
            <person name="Miki H."/>
            <person name="Mignone F."/>
            <person name="Miyake S."/>
            <person name="Morris K."/>
            <person name="Mottagui-Tabar S."/>
            <person name="Mulder N."/>
            <person name="Nakano N."/>
            <person name="Nakauchi H."/>
            <person name="Ng P."/>
            <person name="Nilsson R."/>
            <person name="Nishiguchi S."/>
            <person name="Nishikawa S."/>
            <person name="Nori F."/>
            <person name="Ohara O."/>
            <person name="Okazaki Y."/>
            <person name="Orlando V."/>
            <person name="Pang K.C."/>
            <person name="Pavan W.J."/>
            <person name="Pavesi G."/>
            <person name="Pesole G."/>
            <person name="Petrovsky N."/>
            <person name="Piazza S."/>
            <person name="Reed J."/>
            <person name="Reid J.F."/>
            <person name="Ring B.Z."/>
            <person name="Ringwald M."/>
            <person name="Rost B."/>
            <person name="Ruan Y."/>
            <person name="Salzberg S.L."/>
            <person name="Sandelin A."/>
            <person name="Schneider C."/>
            <person name="Schoenbach C."/>
            <person name="Sekiguchi K."/>
            <person name="Semple C.A."/>
            <person name="Seno S."/>
            <person name="Sessa L."/>
            <person name="Sheng Y."/>
            <person name="Shibata Y."/>
            <person name="Shimada H."/>
            <person name="Shimada K."/>
            <person name="Silva D."/>
            <person name="Sinclair B."/>
            <person name="Sperling S."/>
            <person name="Stupka E."/>
            <person name="Sugiura K."/>
            <person name="Sultana R."/>
            <person name="Takenaka Y."/>
            <person name="Taki K."/>
            <person name="Tammoja K."/>
            <person name="Tan S.L."/>
            <person name="Tang S."/>
            <person name="Taylor M.S."/>
            <person name="Tegner J."/>
            <person name="Teichmann S.A."/>
            <person name="Ueda H.R."/>
            <person name="van Nimwegen E."/>
            <person name="Verardo R."/>
            <person name="Wei C.L."/>
            <person name="Yagi K."/>
            <person name="Yamanishi H."/>
            <person name="Zabarovsky E."/>
            <person name="Zhu S."/>
            <person name="Zimmer A."/>
            <person name="Hide W."/>
            <person name="Bult C."/>
            <person name="Grimmond S.M."/>
            <person name="Teasdale R.D."/>
            <person name="Liu E.T."/>
            <person name="Brusic V."/>
            <person name="Quackenbush J."/>
            <person name="Wahlestedt C."/>
            <person name="Mattick J.S."/>
            <person name="Hume D.A."/>
            <person name="Kai C."/>
            <person name="Sasaki D."/>
            <person name="Tomaru Y."/>
            <person name="Fukuda S."/>
            <person name="Kanamori-Katayama M."/>
            <person name="Suzuki M."/>
            <person name="Aoki J."/>
            <person name="Arakawa T."/>
            <person name="Iida J."/>
            <person name="Imamura K."/>
            <person name="Itoh M."/>
            <person name="Kato T."/>
            <person name="Kawaji H."/>
            <person name="Kawagashira N."/>
            <person name="Kawashima T."/>
            <person name="Kojima M."/>
            <person name="Kondo S."/>
            <person name="Konno H."/>
            <person name="Nakano K."/>
            <person name="Ninomiya N."/>
            <person name="Nishio T."/>
            <person name="Okada M."/>
            <person name="Plessy C."/>
            <person name="Shibata K."/>
            <person name="Shiraki T."/>
            <person name="Suzuki S."/>
            <person name="Tagami M."/>
            <person name="Waki K."/>
            <person name="Watahiki A."/>
            <person name="Okamura-Oho Y."/>
            <person name="Suzuki H."/>
            <person name="Kawai J."/>
            <person name="Hayashizaki Y."/>
        </authorList>
    </citation>
    <scope>NUCLEOTIDE SEQUENCE [LARGE SCALE MRNA]</scope>
    <source>
        <strain>C57BL/6J</strain>
        <strain>NOD</strain>
        <tissue>Thymus</tissue>
    </source>
</reference>
<reference key="2">
    <citation type="journal article" date="2009" name="PLoS Biol.">
        <title>Lineage-specific biology revealed by a finished genome assembly of the mouse.</title>
        <authorList>
            <person name="Church D.M."/>
            <person name="Goodstadt L."/>
            <person name="Hillier L.W."/>
            <person name="Zody M.C."/>
            <person name="Goldstein S."/>
            <person name="She X."/>
            <person name="Bult C.J."/>
            <person name="Agarwala R."/>
            <person name="Cherry J.L."/>
            <person name="DiCuccio M."/>
            <person name="Hlavina W."/>
            <person name="Kapustin Y."/>
            <person name="Meric P."/>
            <person name="Maglott D."/>
            <person name="Birtle Z."/>
            <person name="Marques A.C."/>
            <person name="Graves T."/>
            <person name="Zhou S."/>
            <person name="Teague B."/>
            <person name="Potamousis K."/>
            <person name="Churas C."/>
            <person name="Place M."/>
            <person name="Herschleb J."/>
            <person name="Runnheim R."/>
            <person name="Forrest D."/>
            <person name="Amos-Landgraf J."/>
            <person name="Schwartz D.C."/>
            <person name="Cheng Z."/>
            <person name="Lindblad-Toh K."/>
            <person name="Eichler E.E."/>
            <person name="Ponting C.P."/>
        </authorList>
    </citation>
    <scope>NUCLEOTIDE SEQUENCE [LARGE SCALE GENOMIC DNA]</scope>
    <source>
        <strain>C57BL/6J</strain>
    </source>
</reference>
<reference key="3">
    <citation type="journal article" date="2004" name="Genome Res.">
        <title>The status, quality, and expansion of the NIH full-length cDNA project: the Mammalian Gene Collection (MGC).</title>
        <authorList>
            <consortium name="The MGC Project Team"/>
        </authorList>
    </citation>
    <scope>NUCLEOTIDE SEQUENCE [LARGE SCALE MRNA]</scope>
    <source>
        <strain>C57BL/6NCr</strain>
        <tissue>Hematopoietic stem cell</tissue>
    </source>
</reference>
<comment type="function">
    <text evidence="1">Putative receptor for purines coupled to G-proteins.</text>
</comment>
<comment type="subcellular location">
    <subcellularLocation>
        <location>Cell membrane</location>
        <topology>Multi-pass membrane protein</topology>
    </subcellularLocation>
</comment>
<comment type="similarity">
    <text evidence="3">Belongs to the G-protein coupled receptor 1 family.</text>
</comment>
<comment type="sequence caution" evidence="4">
    <conflict type="erroneous gene model prediction">
        <sequence resource="EMBL-CDS" id="CAM22200"/>
    </conflict>
</comment>
<dbReference type="EMBL" id="AK041351">
    <property type="protein sequence ID" value="BAC30914.1"/>
    <property type="molecule type" value="mRNA"/>
</dbReference>
<dbReference type="EMBL" id="AK088234">
    <property type="protein sequence ID" value="BAC40227.1"/>
    <property type="molecule type" value="mRNA"/>
</dbReference>
<dbReference type="EMBL" id="AL928594">
    <property type="protein sequence ID" value="CAM22201.1"/>
    <property type="molecule type" value="Genomic_DNA"/>
</dbReference>
<dbReference type="EMBL" id="AL928594">
    <property type="protein sequence ID" value="CAM22200.1"/>
    <property type="status" value="ALT_SEQ"/>
    <property type="molecule type" value="Genomic_DNA"/>
</dbReference>
<dbReference type="EMBL" id="BC053707">
    <property type="protein sequence ID" value="AAH53707.1"/>
    <property type="molecule type" value="mRNA"/>
</dbReference>
<dbReference type="CCDS" id="CCDS30346.1"/>
<dbReference type="RefSeq" id="NP_001344739.1">
    <property type="nucleotide sequence ID" value="NM_001357810.2"/>
</dbReference>
<dbReference type="RefSeq" id="NP_766023.1">
    <property type="nucleotide sequence ID" value="NM_172435.5"/>
</dbReference>
<dbReference type="SMR" id="Q8BFU7"/>
<dbReference type="FunCoup" id="Q8BFU7">
    <property type="interactions" value="532"/>
</dbReference>
<dbReference type="STRING" id="10090.ENSMUSP00000061296"/>
<dbReference type="BindingDB" id="Q8BFU7"/>
<dbReference type="ChEMBL" id="CHEMBL3562168"/>
<dbReference type="GlyCosmos" id="Q8BFU7">
    <property type="glycosylation" value="2 sites, No reported glycans"/>
</dbReference>
<dbReference type="GlyGen" id="Q8BFU7">
    <property type="glycosylation" value="2 sites"/>
</dbReference>
<dbReference type="iPTMnet" id="Q8BFU7"/>
<dbReference type="PhosphoSitePlus" id="Q8BFU7"/>
<dbReference type="jPOST" id="Q8BFU7"/>
<dbReference type="PaxDb" id="10090-ENSMUSP00000061296"/>
<dbReference type="ProteomicsDB" id="294419"/>
<dbReference type="Antibodypedia" id="14108">
    <property type="antibodies" value="188 antibodies from 29 providers"/>
</dbReference>
<dbReference type="DNASU" id="78826"/>
<dbReference type="Ensembl" id="ENSMUST00000053375.4">
    <property type="protein sequence ID" value="ENSMUSP00000061296.4"/>
    <property type="gene ID" value="ENSMUSG00000050921.13"/>
</dbReference>
<dbReference type="Ensembl" id="ENSMUST00000118666.8">
    <property type="protein sequence ID" value="ENSMUSP00000113507.2"/>
    <property type="gene ID" value="ENSMUSG00000050921.13"/>
</dbReference>
<dbReference type="GeneID" id="78826"/>
<dbReference type="KEGG" id="mmu:78826"/>
<dbReference type="UCSC" id="uc009uby.1">
    <property type="organism name" value="mouse"/>
</dbReference>
<dbReference type="AGR" id="MGI:1926076"/>
<dbReference type="CTD" id="27334"/>
<dbReference type="MGI" id="MGI:1926076">
    <property type="gene designation" value="P2ry10"/>
</dbReference>
<dbReference type="VEuPathDB" id="HostDB:ENSMUSG00000050921"/>
<dbReference type="eggNOG" id="ENOG502QTX2">
    <property type="taxonomic scope" value="Eukaryota"/>
</dbReference>
<dbReference type="GeneTree" id="ENSGT01130000278275"/>
<dbReference type="HOGENOM" id="CLU_009579_8_2_1"/>
<dbReference type="InParanoid" id="Q8BFU7"/>
<dbReference type="OMA" id="KTESCFA"/>
<dbReference type="PhylomeDB" id="Q8BFU7"/>
<dbReference type="TreeFam" id="TF350009"/>
<dbReference type="Reactome" id="R-MMU-416476">
    <property type="pathway name" value="G alpha (q) signalling events"/>
</dbReference>
<dbReference type="Reactome" id="R-MMU-417957">
    <property type="pathway name" value="P2Y receptors"/>
</dbReference>
<dbReference type="BioGRID-ORCS" id="78826">
    <property type="hits" value="1 hit in 77 CRISPR screens"/>
</dbReference>
<dbReference type="PRO" id="PR:Q8BFU7"/>
<dbReference type="Proteomes" id="UP000000589">
    <property type="component" value="Chromosome X"/>
</dbReference>
<dbReference type="RNAct" id="Q8BFU7">
    <property type="molecule type" value="protein"/>
</dbReference>
<dbReference type="Bgee" id="ENSMUSG00000050921">
    <property type="expression patterns" value="Expressed in peripheral lymph node and 58 other cell types or tissues"/>
</dbReference>
<dbReference type="ExpressionAtlas" id="Q8BFU7">
    <property type="expression patterns" value="baseline and differential"/>
</dbReference>
<dbReference type="GO" id="GO:0005886">
    <property type="term" value="C:plasma membrane"/>
    <property type="evidence" value="ECO:0007669"/>
    <property type="project" value="UniProtKB-SubCell"/>
</dbReference>
<dbReference type="GO" id="GO:0004930">
    <property type="term" value="F:G protein-coupled receptor activity"/>
    <property type="evidence" value="ECO:0007669"/>
    <property type="project" value="UniProtKB-KW"/>
</dbReference>
<dbReference type="FunFam" id="1.20.1070.10:FF:000146">
    <property type="entry name" value="putative P2Y purinoceptor 10 isoform X1"/>
    <property type="match status" value="1"/>
</dbReference>
<dbReference type="Gene3D" id="1.20.1070.10">
    <property type="entry name" value="Rhodopsin 7-helix transmembrane proteins"/>
    <property type="match status" value="1"/>
</dbReference>
<dbReference type="InterPro" id="IPR000276">
    <property type="entry name" value="GPCR_Rhodpsn"/>
</dbReference>
<dbReference type="InterPro" id="IPR017452">
    <property type="entry name" value="GPCR_Rhodpsn_7TM"/>
</dbReference>
<dbReference type="PANTHER" id="PTHR24232">
    <property type="entry name" value="G-PROTEIN COUPLED RECEPTOR"/>
    <property type="match status" value="1"/>
</dbReference>
<dbReference type="PANTHER" id="PTHR24232:SF47">
    <property type="entry name" value="P2Y PURINOCEPTOR 10-RELATED"/>
    <property type="match status" value="1"/>
</dbReference>
<dbReference type="Pfam" id="PF00001">
    <property type="entry name" value="7tm_1"/>
    <property type="match status" value="1"/>
</dbReference>
<dbReference type="PRINTS" id="PR00237">
    <property type="entry name" value="GPCRRHODOPSN"/>
</dbReference>
<dbReference type="PRINTS" id="PR01157">
    <property type="entry name" value="P2YPURNOCPTR"/>
</dbReference>
<dbReference type="SUPFAM" id="SSF81321">
    <property type="entry name" value="Family A G protein-coupled receptor-like"/>
    <property type="match status" value="1"/>
</dbReference>
<dbReference type="PROSITE" id="PS50262">
    <property type="entry name" value="G_PROTEIN_RECEP_F1_2"/>
    <property type="match status" value="1"/>
</dbReference>
<proteinExistence type="evidence at transcript level"/>
<organism>
    <name type="scientific">Mus musculus</name>
    <name type="common">Mouse</name>
    <dbReference type="NCBI Taxonomy" id="10090"/>
    <lineage>
        <taxon>Eukaryota</taxon>
        <taxon>Metazoa</taxon>
        <taxon>Chordata</taxon>
        <taxon>Craniata</taxon>
        <taxon>Vertebrata</taxon>
        <taxon>Euteleostomi</taxon>
        <taxon>Mammalia</taxon>
        <taxon>Eutheria</taxon>
        <taxon>Euarchontoglires</taxon>
        <taxon>Glires</taxon>
        <taxon>Rodentia</taxon>
        <taxon>Myomorpha</taxon>
        <taxon>Muroidea</taxon>
        <taxon>Muridae</taxon>
        <taxon>Murinae</taxon>
        <taxon>Mus</taxon>
        <taxon>Mus</taxon>
    </lineage>
</organism>
<name>P2Y10_MOUSE</name>
<feature type="chain" id="PRO_0000303885" description="Putative P2Y purinoceptor 10">
    <location>
        <begin position="1"/>
        <end position="328"/>
    </location>
</feature>
<feature type="topological domain" description="Extracellular" evidence="2">
    <location>
        <begin position="1"/>
        <end position="27"/>
    </location>
</feature>
<feature type="transmembrane region" description="Helical; Name=1" evidence="2">
    <location>
        <begin position="28"/>
        <end position="48"/>
    </location>
</feature>
<feature type="topological domain" description="Cytoplasmic" evidence="2">
    <location>
        <begin position="49"/>
        <end position="56"/>
    </location>
</feature>
<feature type="transmembrane region" description="Helical; Name=2" evidence="2">
    <location>
        <begin position="57"/>
        <end position="77"/>
    </location>
</feature>
<feature type="topological domain" description="Extracellular" evidence="2">
    <location>
        <begin position="78"/>
        <end position="91"/>
    </location>
</feature>
<feature type="transmembrane region" description="Helical; Name=3" evidence="2">
    <location>
        <begin position="92"/>
        <end position="112"/>
    </location>
</feature>
<feature type="topological domain" description="Cytoplasmic" evidence="2">
    <location>
        <begin position="113"/>
        <end position="137"/>
    </location>
</feature>
<feature type="transmembrane region" description="Helical; Name=4" evidence="2">
    <location>
        <begin position="138"/>
        <end position="158"/>
    </location>
</feature>
<feature type="topological domain" description="Extracellular" evidence="2">
    <location>
        <begin position="159"/>
        <end position="182"/>
    </location>
</feature>
<feature type="transmembrane region" description="Helical; Name=5" evidence="2">
    <location>
        <begin position="183"/>
        <end position="203"/>
    </location>
</feature>
<feature type="topological domain" description="Cytoplasmic" evidence="2">
    <location>
        <begin position="204"/>
        <end position="233"/>
    </location>
</feature>
<feature type="transmembrane region" description="Helical; Name=6" evidence="2">
    <location>
        <begin position="234"/>
        <end position="254"/>
    </location>
</feature>
<feature type="topological domain" description="Extracellular" evidence="2">
    <location>
        <begin position="255"/>
        <end position="277"/>
    </location>
</feature>
<feature type="transmembrane region" description="Helical; Name=7" evidence="2">
    <location>
        <begin position="278"/>
        <end position="298"/>
    </location>
</feature>
<feature type="topological domain" description="Cytoplasmic" evidence="2">
    <location>
        <begin position="299"/>
        <end position="328"/>
    </location>
</feature>
<feature type="glycosylation site" description="N-linked (GlcNAc...) asparagine" evidence="2">
    <location>
        <position position="4"/>
    </location>
</feature>
<feature type="glycosylation site" description="N-linked (GlcNAc...) asparagine" evidence="2">
    <location>
        <position position="14"/>
    </location>
</feature>
<feature type="disulfide bond" evidence="3">
    <location>
        <begin position="94"/>
        <end position="170"/>
    </location>
</feature>
<feature type="sequence conflict" description="In Ref. 3; AAH53707." evidence="4" ref="3">
    <original>N</original>
    <variation>Y</variation>
    <location>
        <position position="55"/>
    </location>
</feature>
<feature type="sequence conflict" description="In Ref. 3; AAH53707." evidence="4" ref="3">
    <original>C</original>
    <variation>R</variation>
    <location>
        <position position="170"/>
    </location>
</feature>
<gene>
    <name type="primary">P2ry10</name>
</gene>
<keyword id="KW-1003">Cell membrane</keyword>
<keyword id="KW-1015">Disulfide bond</keyword>
<keyword id="KW-0297">G-protein coupled receptor</keyword>
<keyword id="KW-0325">Glycoprotein</keyword>
<keyword id="KW-0472">Membrane</keyword>
<keyword id="KW-0675">Receptor</keyword>
<keyword id="KW-1185">Reference proteome</keyword>
<keyword id="KW-0807">Transducer</keyword>
<keyword id="KW-0812">Transmembrane</keyword>
<keyword id="KW-1133">Transmembrane helix</keyword>
<evidence type="ECO:0000250" key="1"/>
<evidence type="ECO:0000255" key="2"/>
<evidence type="ECO:0000255" key="3">
    <source>
        <dbReference type="PROSITE-ProRule" id="PRU00521"/>
    </source>
</evidence>
<evidence type="ECO:0000305" key="4"/>